<sequence length="150" mass="16925">MEIQTKTLGTQTVEAHQIITLERGLYGFEKYHRFALFDAVQVPFIHMQSLDDPALSFIAIDPFLFRPDYELDIDDVLLQPLDISSPTDVLVFALVTIPPDGSAVTANLQGPLIVNKKNRKAMQVAMGGDRWRTKHDIVAEMAERRAQEQC</sequence>
<proteinExistence type="evidence at protein level"/>
<gene>
    <name evidence="2 4" type="primary">fliW</name>
    <name type="ordered locus">TP_0658</name>
</gene>
<reference key="1">
    <citation type="journal article" date="1998" name="Science">
        <title>Complete genome sequence of Treponema pallidum, the syphilis spirochete.</title>
        <authorList>
            <person name="Fraser C.M."/>
            <person name="Norris S.J."/>
            <person name="Weinstock G.M."/>
            <person name="White O."/>
            <person name="Sutton G.G."/>
            <person name="Dodson R.J."/>
            <person name="Gwinn M.L."/>
            <person name="Hickey E.K."/>
            <person name="Clayton R.A."/>
            <person name="Ketchum K.A."/>
            <person name="Sodergren E."/>
            <person name="Hardham J.M."/>
            <person name="McLeod M.P."/>
            <person name="Salzberg S.L."/>
            <person name="Peterson J.D."/>
            <person name="Khalak H.G."/>
            <person name="Richardson D.L."/>
            <person name="Howell J.K."/>
            <person name="Chidambaram M."/>
            <person name="Utterback T.R."/>
            <person name="McDonald L.A."/>
            <person name="Artiach P."/>
            <person name="Bowman C."/>
            <person name="Cotton M.D."/>
            <person name="Fujii C."/>
            <person name="Garland S.A."/>
            <person name="Hatch B."/>
            <person name="Horst K."/>
            <person name="Roberts K.M."/>
            <person name="Sandusky M."/>
            <person name="Weidman J.F."/>
            <person name="Smith H.O."/>
            <person name="Venter J.C."/>
        </authorList>
    </citation>
    <scope>NUCLEOTIDE SEQUENCE [LARGE SCALE GENOMIC DNA]</scope>
    <source>
        <strain>Nichols</strain>
    </source>
</reference>
<reference key="2">
    <citation type="journal article" date="2006" name="J. Bacteriol.">
        <title>Novel conserved assembly factor of the bacterial flagellum.</title>
        <authorList>
            <person name="Titz B."/>
            <person name="Rajagopala S.V."/>
            <person name="Ester C."/>
            <person name="Haeuser R."/>
            <person name="Uetz P."/>
        </authorList>
    </citation>
    <scope>FUNCTION</scope>
    <scope>INTERACTION WITH FLAGELLINS</scope>
    <source>
        <strain>Nichols</strain>
    </source>
</reference>
<name>FLIW_TREPA</name>
<feature type="chain" id="PRO_0000273014" description="Flagellar assembly factor FliW">
    <location>
        <begin position="1"/>
        <end position="150"/>
    </location>
</feature>
<organism>
    <name type="scientific">Treponema pallidum (strain Nichols)</name>
    <dbReference type="NCBI Taxonomy" id="243276"/>
    <lineage>
        <taxon>Bacteria</taxon>
        <taxon>Pseudomonadati</taxon>
        <taxon>Spirochaetota</taxon>
        <taxon>Spirochaetia</taxon>
        <taxon>Spirochaetales</taxon>
        <taxon>Treponemataceae</taxon>
        <taxon>Treponema</taxon>
    </lineage>
</organism>
<protein>
    <recommendedName>
        <fullName evidence="2 4">Flagellar assembly factor FliW</fullName>
    </recommendedName>
</protein>
<evidence type="ECO:0000250" key="1">
    <source>
        <dbReference type="UniProtKB" id="P96503"/>
    </source>
</evidence>
<evidence type="ECO:0000255" key="2">
    <source>
        <dbReference type="HAMAP-Rule" id="MF_01185"/>
    </source>
</evidence>
<evidence type="ECO:0000269" key="3">
    <source>
    </source>
</evidence>
<evidence type="ECO:0000303" key="4">
    <source>
    </source>
</evidence>
<evidence type="ECO:0000305" key="5"/>
<accession>O83664</accession>
<comment type="function">
    <text evidence="2">Acts as an anti-CsrA protein, binds CsrA and prevents it from repressing translation of its target genes, one of which is flagellin. Binds to flagellin and participates in the assembly of the flagellum.</text>
</comment>
<comment type="function">
    <text evidence="3">Binds to the C-terminal region of flagellin, which is implicated in polymerization, and participates in the assembly of the flagellum (PubMed:16936039).</text>
</comment>
<comment type="subunit">
    <text evidence="1 3">Interacts with translational regulator CsrA (By similarity). Interacts with flagellins FlaB1, FlaB2 and FlaB3.</text>
</comment>
<comment type="subcellular location">
    <subcellularLocation>
        <location evidence="2 5">Cytoplasm</location>
    </subcellularLocation>
</comment>
<comment type="similarity">
    <text evidence="2 5">Belongs to the FliW family.</text>
</comment>
<dbReference type="EMBL" id="AE000520">
    <property type="protein sequence ID" value="AAC65632.1"/>
    <property type="molecule type" value="Genomic_DNA"/>
</dbReference>
<dbReference type="PIR" id="C71297">
    <property type="entry name" value="C71297"/>
</dbReference>
<dbReference type="RefSeq" id="WP_010882103.1">
    <property type="nucleotide sequence ID" value="NC_021490.2"/>
</dbReference>
<dbReference type="SMR" id="O83664"/>
<dbReference type="IntAct" id="O83664">
    <property type="interactions" value="11"/>
</dbReference>
<dbReference type="STRING" id="243276.TP_0658"/>
<dbReference type="EnsemblBacteria" id="AAC65632">
    <property type="protein sequence ID" value="AAC65632"/>
    <property type="gene ID" value="TP_0658"/>
</dbReference>
<dbReference type="KEGG" id="tpa:TP_0658"/>
<dbReference type="KEGG" id="tpw:TPANIC_0658"/>
<dbReference type="eggNOG" id="COG1699">
    <property type="taxonomic scope" value="Bacteria"/>
</dbReference>
<dbReference type="HOGENOM" id="CLU_112356_0_2_12"/>
<dbReference type="OrthoDB" id="9801235at2"/>
<dbReference type="Proteomes" id="UP000000811">
    <property type="component" value="Chromosome"/>
</dbReference>
<dbReference type="GO" id="GO:0005737">
    <property type="term" value="C:cytoplasm"/>
    <property type="evidence" value="ECO:0007669"/>
    <property type="project" value="UniProtKB-SubCell"/>
</dbReference>
<dbReference type="GO" id="GO:0044780">
    <property type="term" value="P:bacterial-type flagellum assembly"/>
    <property type="evidence" value="ECO:0007669"/>
    <property type="project" value="UniProtKB-UniRule"/>
</dbReference>
<dbReference type="GO" id="GO:0006417">
    <property type="term" value="P:regulation of translation"/>
    <property type="evidence" value="ECO:0007669"/>
    <property type="project" value="UniProtKB-KW"/>
</dbReference>
<dbReference type="Gene3D" id="2.30.290.10">
    <property type="entry name" value="BH3618-like"/>
    <property type="match status" value="1"/>
</dbReference>
<dbReference type="HAMAP" id="MF_01185">
    <property type="entry name" value="FliW"/>
    <property type="match status" value="1"/>
</dbReference>
<dbReference type="InterPro" id="IPR003775">
    <property type="entry name" value="Flagellar_assembly_factor_FliW"/>
</dbReference>
<dbReference type="InterPro" id="IPR024046">
    <property type="entry name" value="Flagellar_assmbl_FliW_dom_sf"/>
</dbReference>
<dbReference type="NCBIfam" id="NF009800">
    <property type="entry name" value="PRK13285.2-3"/>
    <property type="match status" value="1"/>
</dbReference>
<dbReference type="PANTHER" id="PTHR39190">
    <property type="entry name" value="FLAGELLAR ASSEMBLY FACTOR FLIW"/>
    <property type="match status" value="1"/>
</dbReference>
<dbReference type="PANTHER" id="PTHR39190:SF1">
    <property type="entry name" value="FLAGELLAR ASSEMBLY FACTOR FLIW"/>
    <property type="match status" value="1"/>
</dbReference>
<dbReference type="Pfam" id="PF02623">
    <property type="entry name" value="FliW"/>
    <property type="match status" value="1"/>
</dbReference>
<dbReference type="SUPFAM" id="SSF141457">
    <property type="entry name" value="BH3618-like"/>
    <property type="match status" value="1"/>
</dbReference>
<keyword id="KW-1005">Bacterial flagellum biogenesis</keyword>
<keyword id="KW-0143">Chaperone</keyword>
<keyword id="KW-0963">Cytoplasm</keyword>
<keyword id="KW-1185">Reference proteome</keyword>
<keyword id="KW-0810">Translation regulation</keyword>